<dbReference type="EMBL" id="U48938">
    <property type="protein sequence ID" value="AAB03696.1"/>
    <property type="molecule type" value="mRNA"/>
</dbReference>
<dbReference type="EMBL" id="AF102173">
    <property type="protein sequence ID" value="AAC72407.1"/>
    <property type="molecule type" value="Genomic_DNA"/>
</dbReference>
<dbReference type="EMBL" id="AL162459">
    <property type="protein sequence ID" value="CAB88325.1"/>
    <property type="molecule type" value="Genomic_DNA"/>
</dbReference>
<dbReference type="EMBL" id="CP002686">
    <property type="protein sequence ID" value="AEE78100.1"/>
    <property type="molecule type" value="Genomic_DNA"/>
</dbReference>
<dbReference type="EMBL" id="AY035154">
    <property type="protein sequence ID" value="AAK59658.1"/>
    <property type="molecule type" value="mRNA"/>
</dbReference>
<dbReference type="EMBL" id="AY062940">
    <property type="protein sequence ID" value="AAL33770.1"/>
    <property type="molecule type" value="mRNA"/>
</dbReference>
<dbReference type="EMBL" id="AY085853">
    <property type="protein sequence ID" value="AAM63066.1"/>
    <property type="molecule type" value="mRNA"/>
</dbReference>
<dbReference type="RefSeq" id="NP_190187.1">
    <molecule id="Q39250-1"/>
    <property type="nucleotide sequence ID" value="NM_114470.3"/>
</dbReference>
<dbReference type="PDB" id="1F7S">
    <property type="method" value="X-ray"/>
    <property type="resolution" value="2.00 A"/>
    <property type="chains" value="A=1-139"/>
</dbReference>
<dbReference type="PDBsum" id="1F7S"/>
<dbReference type="SMR" id="Q39250"/>
<dbReference type="BioGRID" id="9064">
    <property type="interactions" value="2"/>
</dbReference>
<dbReference type="FunCoup" id="Q39250">
    <property type="interactions" value="3076"/>
</dbReference>
<dbReference type="STRING" id="3702.Q39250"/>
<dbReference type="iPTMnet" id="Q39250"/>
<dbReference type="PaxDb" id="3702-AT3G46010.2"/>
<dbReference type="ProteomicsDB" id="244815">
    <molecule id="Q39250-1"/>
</dbReference>
<dbReference type="EnsemblPlants" id="AT3G46010.1">
    <molecule id="Q39250-1"/>
    <property type="protein sequence ID" value="AT3G46010.1"/>
    <property type="gene ID" value="AT3G46010"/>
</dbReference>
<dbReference type="GeneID" id="823744"/>
<dbReference type="Gramene" id="AT3G46010.1">
    <molecule id="Q39250-1"/>
    <property type="protein sequence ID" value="AT3G46010.1"/>
    <property type="gene ID" value="AT3G46010"/>
</dbReference>
<dbReference type="KEGG" id="ath:AT3G46010"/>
<dbReference type="Araport" id="AT3G46010"/>
<dbReference type="TAIR" id="AT3G46010">
    <property type="gene designation" value="ADF1"/>
</dbReference>
<dbReference type="eggNOG" id="KOG1735">
    <property type="taxonomic scope" value="Eukaryota"/>
</dbReference>
<dbReference type="HOGENOM" id="CLU_094004_2_2_1"/>
<dbReference type="InParanoid" id="Q39250"/>
<dbReference type="OMA" id="MYIRANA"/>
<dbReference type="PhylomeDB" id="Q39250"/>
<dbReference type="CD-CODE" id="4299E36E">
    <property type="entry name" value="Nucleolus"/>
</dbReference>
<dbReference type="EvolutionaryTrace" id="Q39250"/>
<dbReference type="PRO" id="PR:Q39250"/>
<dbReference type="Proteomes" id="UP000006548">
    <property type="component" value="Chromosome 3"/>
</dbReference>
<dbReference type="ExpressionAtlas" id="Q39250">
    <property type="expression patterns" value="baseline and differential"/>
</dbReference>
<dbReference type="GO" id="GO:0015629">
    <property type="term" value="C:actin cytoskeleton"/>
    <property type="evidence" value="ECO:0007669"/>
    <property type="project" value="InterPro"/>
</dbReference>
<dbReference type="GO" id="GO:0005737">
    <property type="term" value="C:cytoplasm"/>
    <property type="evidence" value="ECO:0007669"/>
    <property type="project" value="UniProtKB-KW"/>
</dbReference>
<dbReference type="GO" id="GO:0003779">
    <property type="term" value="F:actin binding"/>
    <property type="evidence" value="ECO:0007669"/>
    <property type="project" value="UniProtKB-KW"/>
</dbReference>
<dbReference type="GO" id="GO:0030042">
    <property type="term" value="P:actin filament depolymerization"/>
    <property type="evidence" value="ECO:0007669"/>
    <property type="project" value="InterPro"/>
</dbReference>
<dbReference type="CDD" id="cd11286">
    <property type="entry name" value="ADF_cofilin_like"/>
    <property type="match status" value="1"/>
</dbReference>
<dbReference type="FunFam" id="3.40.20.10:FF:000025">
    <property type="entry name" value="Actin-depolymerizing factor 2"/>
    <property type="match status" value="1"/>
</dbReference>
<dbReference type="Gene3D" id="3.40.20.10">
    <property type="entry name" value="Severin"/>
    <property type="match status" value="1"/>
</dbReference>
<dbReference type="InterPro" id="IPR002108">
    <property type="entry name" value="ADF-H"/>
</dbReference>
<dbReference type="InterPro" id="IPR029006">
    <property type="entry name" value="ADF-H/Gelsolin-like_dom_sf"/>
</dbReference>
<dbReference type="InterPro" id="IPR017904">
    <property type="entry name" value="ADF/Cofilin"/>
</dbReference>
<dbReference type="PANTHER" id="PTHR11913">
    <property type="entry name" value="COFILIN-RELATED"/>
    <property type="match status" value="1"/>
</dbReference>
<dbReference type="Pfam" id="PF00241">
    <property type="entry name" value="Cofilin_ADF"/>
    <property type="match status" value="1"/>
</dbReference>
<dbReference type="SMART" id="SM00102">
    <property type="entry name" value="ADF"/>
    <property type="match status" value="1"/>
</dbReference>
<dbReference type="SUPFAM" id="SSF55753">
    <property type="entry name" value="Actin depolymerizing proteins"/>
    <property type="match status" value="1"/>
</dbReference>
<dbReference type="PROSITE" id="PS51263">
    <property type="entry name" value="ADF_H"/>
    <property type="match status" value="1"/>
</dbReference>
<evidence type="ECO:0000255" key="1">
    <source>
        <dbReference type="PROSITE-ProRule" id="PRU00599"/>
    </source>
</evidence>
<evidence type="ECO:0000269" key="2">
    <source>
    </source>
</evidence>
<evidence type="ECO:0000269" key="3">
    <source>
    </source>
</evidence>
<evidence type="ECO:0000269" key="4">
    <source>
    </source>
</evidence>
<evidence type="ECO:0000269" key="5">
    <source>
    </source>
</evidence>
<evidence type="ECO:0000269" key="6">
    <source>
    </source>
</evidence>
<evidence type="ECO:0000269" key="7">
    <source>
    </source>
</evidence>
<evidence type="ECO:0000269" key="8">
    <source>
    </source>
</evidence>
<evidence type="ECO:0000305" key="9"/>
<evidence type="ECO:0007829" key="10">
    <source>
        <dbReference type="PDB" id="1F7S"/>
    </source>
</evidence>
<gene>
    <name type="primary">ADF1</name>
    <name type="ordered locus">At3g46010</name>
    <name type="ORF">F16L2_220</name>
</gene>
<comment type="function">
    <text evidence="2 4 5">Actin-depolymerizing protein. Stimulates F-actin depolymerization. Involved in plant development, cell organ expansion and flowering by controlling breakdown of thick actin cables (PubMed:11402164). Severs actin filaments or bundles and promotes actin cytoskeleton disassembly (PubMed:21570971). Binds monomeric actin (G-actin) with a marked preference for the ADP-loaded form and inhibits the rate of nucleotide exchange on G-actin (PubMed:17538023).</text>
</comment>
<comment type="subunit">
    <text evidence="8">Interacts with the 14-3-3-like protein GRF6/AFT1.</text>
</comment>
<comment type="subcellular location">
    <subcellularLocation>
        <location evidence="5">Cytoplasm</location>
        <location evidence="5">Cytoskeleton</location>
    </subcellularLocation>
</comment>
<comment type="alternative products">
    <event type="alternative splicing"/>
    <isoform>
        <id>Q39250-1</id>
        <name>1</name>
        <sequence type="displayed"/>
    </isoform>
    <text>A number of isoforms are produced. According to EST sequences.</text>
</comment>
<comment type="tissue specificity">
    <text evidence="3">Expressed in vascular tissues of all organs.</text>
</comment>
<comment type="PTM">
    <text evidence="7">Phosphorylation at Ser-6 by CPK3/CDPK6 inhibits actin-depolimerizing activity.</text>
</comment>
<comment type="disruption phenotype">
    <text evidence="8">Increased length of hypocotyls under dark-grown conditions.</text>
</comment>
<comment type="similarity">
    <text evidence="9">Belongs to the actin-binding proteins ADF family.</text>
</comment>
<feature type="chain" id="PRO_0000214923" description="Actin-depolymerizing factor 1">
    <location>
        <begin position="1"/>
        <end position="139"/>
    </location>
</feature>
<feature type="domain" description="ADF-H" evidence="1">
    <location>
        <begin position="5"/>
        <end position="139"/>
    </location>
</feature>
<feature type="modified residue" description="Phosphoserine; by CPK3" evidence="7">
    <location>
        <position position="6"/>
    </location>
</feature>
<feature type="mutagenesis site" description="Loss of phosphorylation by CPK3/CDPK6." evidence="7">
    <original>S</original>
    <variation>A</variation>
    <variation>D</variation>
    <location>
        <position position="6"/>
    </location>
</feature>
<feature type="mutagenesis site" description="Reduces binding affinity to F-actin and actin-depolimerizing activity; when associated with A-135 and A-137." evidence="6">
    <original>K</original>
    <variation>A</variation>
    <location>
        <position position="82"/>
    </location>
</feature>
<feature type="mutagenesis site" description="Reduces binding affinity to both G-actin and F-actin, and actin-depolimerizing activity; when associated with A-100." evidence="6">
    <original>R</original>
    <variation>A</variation>
    <location>
        <position position="98"/>
    </location>
</feature>
<feature type="mutagenesis site" description="Reduces binding affinity to both G-actin and F-actin, and actin-depolimerizing activity; when associated with A-98." evidence="6">
    <original>K</original>
    <variation>A</variation>
    <location>
        <position position="100"/>
    </location>
</feature>
<feature type="mutagenesis site" description="Reduces binding affinity to F-actin and actin-depolimerizing activity; when associated with A-82 and A-137." evidence="6">
    <original>R</original>
    <variation>A</variation>
    <location>
        <position position="135"/>
    </location>
</feature>
<feature type="mutagenesis site" description="Reduces binding affinity to F-actin and actin-depolimerizing activity; when associated with A-82 and A-135." evidence="6">
    <original>R</original>
    <variation>A</variation>
    <location>
        <position position="137"/>
    </location>
</feature>
<feature type="helix" evidence="10">
    <location>
        <begin position="12"/>
        <end position="24"/>
    </location>
</feature>
<feature type="strand" evidence="10">
    <location>
        <begin position="28"/>
        <end position="35"/>
    </location>
</feature>
<feature type="turn" evidence="10">
    <location>
        <begin position="36"/>
        <end position="39"/>
    </location>
</feature>
<feature type="strand" evidence="10">
    <location>
        <begin position="40"/>
        <end position="46"/>
    </location>
</feature>
<feature type="helix" evidence="10">
    <location>
        <begin position="53"/>
        <end position="57"/>
    </location>
</feature>
<feature type="strand" evidence="10">
    <location>
        <begin position="66"/>
        <end position="75"/>
    </location>
</feature>
<feature type="strand" evidence="10">
    <location>
        <begin position="81"/>
        <end position="90"/>
    </location>
</feature>
<feature type="helix" evidence="10">
    <location>
        <begin position="97"/>
        <end position="111"/>
    </location>
</feature>
<feature type="strand" evidence="10">
    <location>
        <begin position="119"/>
        <end position="123"/>
    </location>
</feature>
<protein>
    <recommendedName>
        <fullName>Actin-depolymerizing factor 1</fullName>
        <shortName>ADF-1</shortName>
        <shortName>AtADF1</shortName>
    </recommendedName>
</protein>
<proteinExistence type="evidence at protein level"/>
<keyword id="KW-0002">3D-structure</keyword>
<keyword id="KW-0009">Actin-binding</keyword>
<keyword id="KW-0025">Alternative splicing</keyword>
<keyword id="KW-0963">Cytoplasm</keyword>
<keyword id="KW-0206">Cytoskeleton</keyword>
<keyword id="KW-0597">Phosphoprotein</keyword>
<keyword id="KW-1185">Reference proteome</keyword>
<organism>
    <name type="scientific">Arabidopsis thaliana</name>
    <name type="common">Mouse-ear cress</name>
    <dbReference type="NCBI Taxonomy" id="3702"/>
    <lineage>
        <taxon>Eukaryota</taxon>
        <taxon>Viridiplantae</taxon>
        <taxon>Streptophyta</taxon>
        <taxon>Embryophyta</taxon>
        <taxon>Tracheophyta</taxon>
        <taxon>Spermatophyta</taxon>
        <taxon>Magnoliopsida</taxon>
        <taxon>eudicotyledons</taxon>
        <taxon>Gunneridae</taxon>
        <taxon>Pentapetalae</taxon>
        <taxon>rosids</taxon>
        <taxon>malvids</taxon>
        <taxon>Brassicales</taxon>
        <taxon>Brassicaceae</taxon>
        <taxon>Camelineae</taxon>
        <taxon>Arabidopsis</taxon>
    </lineage>
</organism>
<accession>Q39250</accession>
<sequence>MANAASGMAVHDDCKLRFLELKAKRTHRFIVYKIEEKQKQVVVEKVGQPIQTYEEFAACLPADECRYAIYDFDFVTAENCQKSKIFFIAWCPDIAKVRSKMIYASSKDRFKRELDGIQVELQATDPTEMDLDVFRSRAN</sequence>
<reference key="1">
    <citation type="submission" date="1996-02" db="EMBL/GenBank/DDBJ databases">
        <title>Actin depolymerizing factor from Arabidopsis thaliana severs polymers and binds to monomers in a pH-dependent manner.</title>
        <authorList>
            <person name="Staiger C.J."/>
            <person name="Ashworth S.L."/>
        </authorList>
    </citation>
    <scope>NUCLEOTIDE SEQUENCE [MRNA]</scope>
    <source>
        <strain>cv. Columbia</strain>
    </source>
</reference>
<reference key="2">
    <citation type="journal article" date="2001" name="Plant Mol. Biol.">
        <title>Molecular identification and characterization of the Arabidopsis AtADF1, AtADF5 and AtADF6 genes.</title>
        <authorList>
            <person name="Dong C.-H."/>
            <person name="Kost B."/>
            <person name="Xia G.-X."/>
            <person name="Chua N.-H."/>
        </authorList>
    </citation>
    <scope>NUCLEOTIDE SEQUENCE [GENOMIC DNA]</scope>
    <scope>TISSUE SPECIFICITY</scope>
    <scope>CHARACTERIZATION</scope>
    <source>
        <strain>cv. Columbia</strain>
    </source>
</reference>
<reference key="3">
    <citation type="journal article" date="2000" name="Nature">
        <title>Sequence and analysis of chromosome 3 of the plant Arabidopsis thaliana.</title>
        <authorList>
            <person name="Salanoubat M."/>
            <person name="Lemcke K."/>
            <person name="Rieger M."/>
            <person name="Ansorge W."/>
            <person name="Unseld M."/>
            <person name="Fartmann B."/>
            <person name="Valle G."/>
            <person name="Bloecker H."/>
            <person name="Perez-Alonso M."/>
            <person name="Obermaier B."/>
            <person name="Delseny M."/>
            <person name="Boutry M."/>
            <person name="Grivell L.A."/>
            <person name="Mache R."/>
            <person name="Puigdomenech P."/>
            <person name="De Simone V."/>
            <person name="Choisne N."/>
            <person name="Artiguenave F."/>
            <person name="Robert C."/>
            <person name="Brottier P."/>
            <person name="Wincker P."/>
            <person name="Cattolico L."/>
            <person name="Weissenbach J."/>
            <person name="Saurin W."/>
            <person name="Quetier F."/>
            <person name="Schaefer M."/>
            <person name="Mueller-Auer S."/>
            <person name="Gabel C."/>
            <person name="Fuchs M."/>
            <person name="Benes V."/>
            <person name="Wurmbach E."/>
            <person name="Drzonek H."/>
            <person name="Erfle H."/>
            <person name="Jordan N."/>
            <person name="Bangert S."/>
            <person name="Wiedelmann R."/>
            <person name="Kranz H."/>
            <person name="Voss H."/>
            <person name="Holland R."/>
            <person name="Brandt P."/>
            <person name="Nyakatura G."/>
            <person name="Vezzi A."/>
            <person name="D'Angelo M."/>
            <person name="Pallavicini A."/>
            <person name="Toppo S."/>
            <person name="Simionati B."/>
            <person name="Conrad A."/>
            <person name="Hornischer K."/>
            <person name="Kauer G."/>
            <person name="Loehnert T.-H."/>
            <person name="Nordsiek G."/>
            <person name="Reichelt J."/>
            <person name="Scharfe M."/>
            <person name="Schoen O."/>
            <person name="Bargues M."/>
            <person name="Terol J."/>
            <person name="Climent J."/>
            <person name="Navarro P."/>
            <person name="Collado C."/>
            <person name="Perez-Perez A."/>
            <person name="Ottenwaelder B."/>
            <person name="Duchemin D."/>
            <person name="Cooke R."/>
            <person name="Laudie M."/>
            <person name="Berger-Llauro C."/>
            <person name="Purnelle B."/>
            <person name="Masuy D."/>
            <person name="de Haan M."/>
            <person name="Maarse A.C."/>
            <person name="Alcaraz J.-P."/>
            <person name="Cottet A."/>
            <person name="Casacuberta E."/>
            <person name="Monfort A."/>
            <person name="Argiriou A."/>
            <person name="Flores M."/>
            <person name="Liguori R."/>
            <person name="Vitale D."/>
            <person name="Mannhaupt G."/>
            <person name="Haase D."/>
            <person name="Schoof H."/>
            <person name="Rudd S."/>
            <person name="Zaccaria P."/>
            <person name="Mewes H.-W."/>
            <person name="Mayer K.F.X."/>
            <person name="Kaul S."/>
            <person name="Town C.D."/>
            <person name="Koo H.L."/>
            <person name="Tallon L.J."/>
            <person name="Jenkins J."/>
            <person name="Rooney T."/>
            <person name="Rizzo M."/>
            <person name="Walts A."/>
            <person name="Utterback T."/>
            <person name="Fujii C.Y."/>
            <person name="Shea T.P."/>
            <person name="Creasy T.H."/>
            <person name="Haas B."/>
            <person name="Maiti R."/>
            <person name="Wu D."/>
            <person name="Peterson J."/>
            <person name="Van Aken S."/>
            <person name="Pai G."/>
            <person name="Militscher J."/>
            <person name="Sellers P."/>
            <person name="Gill J.E."/>
            <person name="Feldblyum T.V."/>
            <person name="Preuss D."/>
            <person name="Lin X."/>
            <person name="Nierman W.C."/>
            <person name="Salzberg S.L."/>
            <person name="White O."/>
            <person name="Venter J.C."/>
            <person name="Fraser C.M."/>
            <person name="Kaneko T."/>
            <person name="Nakamura Y."/>
            <person name="Sato S."/>
            <person name="Kato T."/>
            <person name="Asamizu E."/>
            <person name="Sasamoto S."/>
            <person name="Kimura T."/>
            <person name="Idesawa K."/>
            <person name="Kawashima K."/>
            <person name="Kishida Y."/>
            <person name="Kiyokawa C."/>
            <person name="Kohara M."/>
            <person name="Matsumoto M."/>
            <person name="Matsuno A."/>
            <person name="Muraki A."/>
            <person name="Nakayama S."/>
            <person name="Nakazaki N."/>
            <person name="Shinpo S."/>
            <person name="Takeuchi C."/>
            <person name="Wada T."/>
            <person name="Watanabe A."/>
            <person name="Yamada M."/>
            <person name="Yasuda M."/>
            <person name="Tabata S."/>
        </authorList>
    </citation>
    <scope>NUCLEOTIDE SEQUENCE [LARGE SCALE GENOMIC DNA]</scope>
    <source>
        <strain>cv. Columbia</strain>
    </source>
</reference>
<reference key="4">
    <citation type="journal article" date="2017" name="Plant J.">
        <title>Araport11: a complete reannotation of the Arabidopsis thaliana reference genome.</title>
        <authorList>
            <person name="Cheng C.Y."/>
            <person name="Krishnakumar V."/>
            <person name="Chan A.P."/>
            <person name="Thibaud-Nissen F."/>
            <person name="Schobel S."/>
            <person name="Town C.D."/>
        </authorList>
    </citation>
    <scope>GENOME REANNOTATION</scope>
    <source>
        <strain>cv. Columbia</strain>
    </source>
</reference>
<reference key="5">
    <citation type="journal article" date="2003" name="Science">
        <title>Empirical analysis of transcriptional activity in the Arabidopsis genome.</title>
        <authorList>
            <person name="Yamada K."/>
            <person name="Lim J."/>
            <person name="Dale J.M."/>
            <person name="Chen H."/>
            <person name="Shinn P."/>
            <person name="Palm C.J."/>
            <person name="Southwick A.M."/>
            <person name="Wu H.C."/>
            <person name="Kim C.J."/>
            <person name="Nguyen M."/>
            <person name="Pham P.K."/>
            <person name="Cheuk R.F."/>
            <person name="Karlin-Newmann G."/>
            <person name="Liu S.X."/>
            <person name="Lam B."/>
            <person name="Sakano H."/>
            <person name="Wu T."/>
            <person name="Yu G."/>
            <person name="Miranda M."/>
            <person name="Quach H.L."/>
            <person name="Tripp M."/>
            <person name="Chang C.H."/>
            <person name="Lee J.M."/>
            <person name="Toriumi M.J."/>
            <person name="Chan M.M."/>
            <person name="Tang C.C."/>
            <person name="Onodera C.S."/>
            <person name="Deng J.M."/>
            <person name="Akiyama K."/>
            <person name="Ansari Y."/>
            <person name="Arakawa T."/>
            <person name="Banh J."/>
            <person name="Banno F."/>
            <person name="Bowser L."/>
            <person name="Brooks S.Y."/>
            <person name="Carninci P."/>
            <person name="Chao Q."/>
            <person name="Choy N."/>
            <person name="Enju A."/>
            <person name="Goldsmith A.D."/>
            <person name="Gurjal M."/>
            <person name="Hansen N.F."/>
            <person name="Hayashizaki Y."/>
            <person name="Johnson-Hopson C."/>
            <person name="Hsuan V.W."/>
            <person name="Iida K."/>
            <person name="Karnes M."/>
            <person name="Khan S."/>
            <person name="Koesema E."/>
            <person name="Ishida J."/>
            <person name="Jiang P.X."/>
            <person name="Jones T."/>
            <person name="Kawai J."/>
            <person name="Kamiya A."/>
            <person name="Meyers C."/>
            <person name="Nakajima M."/>
            <person name="Narusaka M."/>
            <person name="Seki M."/>
            <person name="Sakurai T."/>
            <person name="Satou M."/>
            <person name="Tamse R."/>
            <person name="Vaysberg M."/>
            <person name="Wallender E.K."/>
            <person name="Wong C."/>
            <person name="Yamamura Y."/>
            <person name="Yuan S."/>
            <person name="Shinozaki K."/>
            <person name="Davis R.W."/>
            <person name="Theologis A."/>
            <person name="Ecker J.R."/>
        </authorList>
    </citation>
    <scope>NUCLEOTIDE SEQUENCE [LARGE SCALE MRNA]</scope>
    <source>
        <strain>cv. Columbia</strain>
    </source>
</reference>
<reference key="6">
    <citation type="submission" date="2002-03" db="EMBL/GenBank/DDBJ databases">
        <title>Full-length cDNA from Arabidopsis thaliana.</title>
        <authorList>
            <person name="Brover V.V."/>
            <person name="Troukhan M.E."/>
            <person name="Alexandrov N.A."/>
            <person name="Lu Y.-P."/>
            <person name="Flavell R.B."/>
            <person name="Feldmann K.A."/>
        </authorList>
    </citation>
    <scope>NUCLEOTIDE SEQUENCE [LARGE SCALE MRNA]</scope>
</reference>
<reference key="7">
    <citation type="journal article" date="2001" name="Plant Cell">
        <title>ADF proteins are involved in the control of flowering and regulate F-actin organization, cell expansion, and organ growth in Arabidopsis.</title>
        <authorList>
            <person name="Dong C.-H."/>
            <person name="Xia G.-X."/>
            <person name="Hong Y."/>
            <person name="Ramachandran S."/>
            <person name="Kost B."/>
            <person name="Chua N.-H."/>
        </authorList>
    </citation>
    <scope>FUNCTION</scope>
</reference>
<reference key="8">
    <citation type="journal article" date="2006" name="J. Plant Physiol.">
        <title>Comparative study of rice and Arabidopsis actin-depolymerizing factors gene families.</title>
        <authorList>
            <person name="Feng Y."/>
            <person name="Liu Q."/>
            <person name="Xue Q."/>
        </authorList>
    </citation>
    <scope>GENE FAMILY</scope>
</reference>
<reference key="9">
    <citation type="journal article" date="2007" name="Mol. Biol. Cell">
        <title>Identification of Arabidopsis cyclase-associated protein 1 as the first nucleotide exchange factor for plant actin.</title>
        <authorList>
            <person name="Chaudhry F."/>
            <person name="Guerin C."/>
            <person name="von Witsch M."/>
            <person name="Blanchoin L."/>
            <person name="Staiger C.J."/>
        </authorList>
    </citation>
    <scope>FUNCTION</scope>
</reference>
<reference key="10">
    <citation type="journal article" date="2011" name="FEBS Lett.">
        <title>Arabidopsis actin-depolymerizing factors (ADFs) 1 and 9 display antagonist activities.</title>
        <authorList>
            <person name="Tholl S."/>
            <person name="Moreau F."/>
            <person name="Hoffmann C."/>
            <person name="Arumugam K."/>
            <person name="Dieterle M."/>
            <person name="Moes D."/>
            <person name="Neumann K."/>
            <person name="Steinmetz A."/>
            <person name="Thomas C."/>
        </authorList>
    </citation>
    <scope>FUNCTION</scope>
    <scope>SUBCELLULAR LOCATION</scope>
</reference>
<reference key="11">
    <citation type="journal article" date="2013" name="J. Integr. Plant Biol.">
        <title>Arabidopsis AtADF1 is functionally affected by mutations on actin binding sites.</title>
        <authorList>
            <person name="Dong C.H."/>
            <person name="Tang W.P."/>
            <person name="Liu J.Y."/>
        </authorList>
    </citation>
    <scope>MUTAGENESIS OF LYS-82; ARG-98; LYS-100; ARG-135 AND ARG-137</scope>
</reference>
<reference key="12">
    <citation type="journal article" date="2013" name="Plant Cell Rep.">
        <title>Arabidopsis CDPK6 phosphorylates ADF1 at N-terminal serine 6 predominantly.</title>
        <authorList>
            <person name="Dong C.H."/>
            <person name="Hong Y."/>
        </authorList>
    </citation>
    <scope>PHOSPHORYLATION AT SER-6</scope>
    <scope>MUTAGENESIS OF SER-6</scope>
</reference>
<reference key="13">
    <citation type="journal article" date="2015" name="Sci. China Life Sci.">
        <title>14-3-3 lambda protein interacts with ADF1 to regulate actin cytoskeleton dynamics in Arabidopsis.</title>
        <authorList>
            <person name="Zhao S."/>
            <person name="Zhao Y."/>
            <person name="Guo Y."/>
        </authorList>
    </citation>
    <scope>INTERACTION WITH GRF6/AFT1</scope>
    <scope>DISRUPTION PHENOTYPE</scope>
</reference>
<reference key="14">
    <citation type="journal article" date="2000" name="Proteins">
        <title>A comparative structural analysis of the ADF/cofilin family.</title>
        <authorList>
            <person name="Bowman G.D."/>
            <person name="Nodelman I.M."/>
            <person name="Hong Y."/>
            <person name="Chua N.-H."/>
            <person name="Lindberg U."/>
            <person name="Schutt C.E."/>
        </authorList>
    </citation>
    <scope>X-RAY CRYSTALLOGRAPHY (2.0 ANGSTROMS)</scope>
</reference>
<name>ADF1_ARATH</name>